<sequence length="206" mass="22474">MLMLFLTVAMVHIVALMSPGPDFFFVSQTAVSRSRKEAMMGVLGITCGVMVWAGIALLGLHLIIEKMAWLHTLIMVGGGLYLCWMGYQMLRGALKKEAVSAPAPQVELAKSGRSFLKGLLTNLANPKAIIYFGSVFSLFVGDNVGTTARWGIFALIIVETLAWFTVVASLFALPQMRRGYQRLAKWIDGFAGALFAGFGIHLIISR</sequence>
<protein>
    <recommendedName>
        <fullName>Threonine efflux protein</fullName>
    </recommendedName>
</protein>
<organism>
    <name type="scientific">Escherichia coli (strain K12)</name>
    <dbReference type="NCBI Taxonomy" id="83333"/>
    <lineage>
        <taxon>Bacteria</taxon>
        <taxon>Pseudomonadati</taxon>
        <taxon>Pseudomonadota</taxon>
        <taxon>Gammaproteobacteria</taxon>
        <taxon>Enterobacterales</taxon>
        <taxon>Enterobacteriaceae</taxon>
        <taxon>Escherichia</taxon>
    </lineage>
</organism>
<evidence type="ECO:0000255" key="1"/>
<evidence type="ECO:0000269" key="2">
    <source>
    </source>
</evidence>
<evidence type="ECO:0000269" key="3">
    <source>
    </source>
</evidence>
<evidence type="ECO:0000305" key="4"/>
<gene>
    <name type="primary">rhtC</name>
    <name type="synonym">yigJ</name>
    <name type="ordered locus">b3823</name>
    <name type="ordered locus">JW5586</name>
</gene>
<proteinExistence type="evidence at protein level"/>
<name>RHTC_ECOLI</name>
<comment type="function">
    <text evidence="2">Conducts the efflux of threonine.</text>
</comment>
<comment type="subcellular location">
    <subcellularLocation>
        <location evidence="3">Cell inner membrane</location>
        <topology evidence="3">Multi-pass membrane protein</topology>
    </subcellularLocation>
</comment>
<comment type="similarity">
    <text evidence="4">Belongs to the Rht family.</text>
</comment>
<comment type="sequence caution" evidence="4">
    <conflict type="frameshift">
        <sequence resource="EMBL-CDS" id="AAA67619"/>
    </conflict>
</comment>
<comment type="sequence caution" evidence="4">
    <conflict type="frameshift">
        <sequence resource="EMBL" id="M30198"/>
    </conflict>
</comment>
<accession>P0AG38</accession>
<accession>P27846</accession>
<accession>Q2M8C8</accession>
<feature type="chain" id="PRO_0000094736" description="Threonine efflux protein">
    <location>
        <begin position="1"/>
        <end position="206"/>
    </location>
</feature>
<feature type="transmembrane region" description="Helical" evidence="1">
    <location>
        <begin position="1"/>
        <end position="21"/>
    </location>
</feature>
<feature type="topological domain" description="Periplasmic" evidence="1">
    <location>
        <begin position="22"/>
        <end position="43"/>
    </location>
</feature>
<feature type="transmembrane region" description="Helical" evidence="1">
    <location>
        <begin position="44"/>
        <end position="64"/>
    </location>
</feature>
<feature type="topological domain" description="Cytoplasmic" evidence="1">
    <location>
        <begin position="65"/>
        <end position="66"/>
    </location>
</feature>
<feature type="transmembrane region" description="Helical" evidence="1">
    <location>
        <begin position="67"/>
        <end position="87"/>
    </location>
</feature>
<feature type="topological domain" description="Periplasmic" evidence="1">
    <location>
        <begin position="88"/>
        <end position="149"/>
    </location>
</feature>
<feature type="transmembrane region" description="Helical" evidence="1">
    <location>
        <begin position="150"/>
        <end position="173"/>
    </location>
</feature>
<feature type="topological domain" description="Cytoplasmic" evidence="1">
    <location>
        <begin position="174"/>
        <end position="206"/>
    </location>
</feature>
<dbReference type="EMBL" id="M87049">
    <property type="protein sequence ID" value="AAA67619.1"/>
    <property type="status" value="ALT_FRAME"/>
    <property type="molecule type" value="Genomic_DNA"/>
</dbReference>
<dbReference type="EMBL" id="U00096">
    <property type="protein sequence ID" value="AAT48222.1"/>
    <property type="molecule type" value="Genomic_DNA"/>
</dbReference>
<dbReference type="EMBL" id="AP009048">
    <property type="protein sequence ID" value="BAE77478.1"/>
    <property type="molecule type" value="Genomic_DNA"/>
</dbReference>
<dbReference type="EMBL" id="M30198">
    <property type="status" value="NOT_ANNOTATED_CDS"/>
    <property type="molecule type" value="Genomic_DNA"/>
</dbReference>
<dbReference type="RefSeq" id="WP_000928824.1">
    <property type="nucleotide sequence ID" value="NZ_SSZK01000046.1"/>
</dbReference>
<dbReference type="RefSeq" id="YP_026264.1">
    <property type="nucleotide sequence ID" value="NC_000913.3"/>
</dbReference>
<dbReference type="BioGRID" id="4263363">
    <property type="interactions" value="8"/>
</dbReference>
<dbReference type="FunCoup" id="P0AG38">
    <property type="interactions" value="93"/>
</dbReference>
<dbReference type="STRING" id="511145.b3823"/>
<dbReference type="TCDB" id="2.A.76.1.2">
    <property type="family name" value="the resistance to homoserine/threonine (rhtb) family"/>
</dbReference>
<dbReference type="PaxDb" id="511145-b3823"/>
<dbReference type="EnsemblBacteria" id="AAT48222">
    <property type="protein sequence ID" value="AAT48222"/>
    <property type="gene ID" value="b3823"/>
</dbReference>
<dbReference type="GeneID" id="75174059"/>
<dbReference type="GeneID" id="948317"/>
<dbReference type="KEGG" id="ecj:JW5586"/>
<dbReference type="KEGG" id="eco:b3823"/>
<dbReference type="KEGG" id="ecoc:C3026_20690"/>
<dbReference type="PATRIC" id="fig|1411691.4.peg.2884"/>
<dbReference type="EchoBASE" id="EB1436"/>
<dbReference type="eggNOG" id="COG1280">
    <property type="taxonomic scope" value="Bacteria"/>
</dbReference>
<dbReference type="HOGENOM" id="CLU_079569_0_1_6"/>
<dbReference type="InParanoid" id="P0AG38"/>
<dbReference type="OMA" id="MAWLHNI"/>
<dbReference type="OrthoDB" id="581870at2"/>
<dbReference type="PhylomeDB" id="P0AG38"/>
<dbReference type="BioCyc" id="EcoCyc:RHTC-MONOMER"/>
<dbReference type="BioCyc" id="MetaCyc:RHTC-MONOMER"/>
<dbReference type="PRO" id="PR:P0AG38"/>
<dbReference type="Proteomes" id="UP000000625">
    <property type="component" value="Chromosome"/>
</dbReference>
<dbReference type="GO" id="GO:0005886">
    <property type="term" value="C:plasma membrane"/>
    <property type="evidence" value="ECO:0000255"/>
    <property type="project" value="EcoCyc"/>
</dbReference>
<dbReference type="GO" id="GO:0015171">
    <property type="term" value="F:amino acid transmembrane transporter activity"/>
    <property type="evidence" value="ECO:0000318"/>
    <property type="project" value="GO_Central"/>
</dbReference>
<dbReference type="GO" id="GO:0015565">
    <property type="term" value="F:threonine efflux transmembrane transporter activity"/>
    <property type="evidence" value="ECO:0000314"/>
    <property type="project" value="EcoCyc"/>
</dbReference>
<dbReference type="GO" id="GO:0006865">
    <property type="term" value="P:amino acid transport"/>
    <property type="evidence" value="ECO:0000318"/>
    <property type="project" value="GO_Central"/>
</dbReference>
<dbReference type="GO" id="GO:0015826">
    <property type="term" value="P:threonine transport"/>
    <property type="evidence" value="ECO:0000314"/>
    <property type="project" value="EcoCyc"/>
</dbReference>
<dbReference type="InterPro" id="IPR004778">
    <property type="entry name" value="Homoserine/Threonine_efflux"/>
</dbReference>
<dbReference type="InterPro" id="IPR001123">
    <property type="entry name" value="LeuE-type"/>
</dbReference>
<dbReference type="NCBIfam" id="TIGR00949">
    <property type="entry name" value="2A76"/>
    <property type="match status" value="1"/>
</dbReference>
<dbReference type="NCBIfam" id="NF007591">
    <property type="entry name" value="PRK10229.1"/>
    <property type="match status" value="1"/>
</dbReference>
<dbReference type="PANTHER" id="PTHR30086">
    <property type="entry name" value="ARGININE EXPORTER PROTEIN ARGO"/>
    <property type="match status" value="1"/>
</dbReference>
<dbReference type="PANTHER" id="PTHR30086:SF19">
    <property type="entry name" value="THREONINE EFFLUX PROTEIN"/>
    <property type="match status" value="1"/>
</dbReference>
<dbReference type="Pfam" id="PF01810">
    <property type="entry name" value="LysE"/>
    <property type="match status" value="1"/>
</dbReference>
<dbReference type="PIRSF" id="PIRSF006324">
    <property type="entry name" value="LeuE"/>
    <property type="match status" value="1"/>
</dbReference>
<keyword id="KW-0997">Cell inner membrane</keyword>
<keyword id="KW-1003">Cell membrane</keyword>
<keyword id="KW-0472">Membrane</keyword>
<keyword id="KW-1185">Reference proteome</keyword>
<keyword id="KW-0812">Transmembrane</keyword>
<keyword id="KW-1133">Transmembrane helix</keyword>
<keyword id="KW-0813">Transport</keyword>
<reference key="1">
    <citation type="journal article" date="1992" name="Science">
        <title>Analysis of the Escherichia coli genome: DNA sequence of the region from 84.5 to 86.5 minutes.</title>
        <authorList>
            <person name="Daniels D.L."/>
            <person name="Plunkett G. III"/>
            <person name="Burland V.D."/>
            <person name="Blattner F.R."/>
        </authorList>
    </citation>
    <scope>NUCLEOTIDE SEQUENCE [LARGE SCALE GENOMIC DNA]</scope>
    <source>
        <strain>K12 / MG1655 / ATCC 47076</strain>
    </source>
</reference>
<reference key="2">
    <citation type="journal article" date="1997" name="Science">
        <title>The complete genome sequence of Escherichia coli K-12.</title>
        <authorList>
            <person name="Blattner F.R."/>
            <person name="Plunkett G. III"/>
            <person name="Bloch C.A."/>
            <person name="Perna N.T."/>
            <person name="Burland V."/>
            <person name="Riley M."/>
            <person name="Collado-Vides J."/>
            <person name="Glasner J.D."/>
            <person name="Rode C.K."/>
            <person name="Mayhew G.F."/>
            <person name="Gregor J."/>
            <person name="Davis N.W."/>
            <person name="Kirkpatrick H.A."/>
            <person name="Goeden M.A."/>
            <person name="Rose D.J."/>
            <person name="Mau B."/>
            <person name="Shao Y."/>
        </authorList>
    </citation>
    <scope>NUCLEOTIDE SEQUENCE [LARGE SCALE GENOMIC DNA]</scope>
    <source>
        <strain>K12 / MG1655 / ATCC 47076</strain>
    </source>
</reference>
<reference key="3">
    <citation type="journal article" date="2006" name="Nucleic Acids Res.">
        <title>Escherichia coli K-12: a cooperatively developed annotation snapshot -- 2005.</title>
        <authorList>
            <person name="Riley M."/>
            <person name="Abe T."/>
            <person name="Arnaud M.B."/>
            <person name="Berlyn M.K.B."/>
            <person name="Blattner F.R."/>
            <person name="Chaudhuri R.R."/>
            <person name="Glasner J.D."/>
            <person name="Horiuchi T."/>
            <person name="Keseler I.M."/>
            <person name="Kosuge T."/>
            <person name="Mori H."/>
            <person name="Perna N.T."/>
            <person name="Plunkett G. III"/>
            <person name="Rudd K.E."/>
            <person name="Serres M.H."/>
            <person name="Thomas G.H."/>
            <person name="Thomson N.R."/>
            <person name="Wishart D."/>
            <person name="Wanner B.L."/>
        </authorList>
    </citation>
    <scope>SEQUENCE REVISION</scope>
</reference>
<reference key="4">
    <citation type="journal article" date="2006" name="Mol. Syst. Biol.">
        <title>Highly accurate genome sequences of Escherichia coli K-12 strains MG1655 and W3110.</title>
        <authorList>
            <person name="Hayashi K."/>
            <person name="Morooka N."/>
            <person name="Yamamoto Y."/>
            <person name="Fujita K."/>
            <person name="Isono K."/>
            <person name="Choi S."/>
            <person name="Ohtsubo E."/>
            <person name="Baba T."/>
            <person name="Wanner B.L."/>
            <person name="Mori H."/>
            <person name="Horiuchi T."/>
        </authorList>
    </citation>
    <scope>NUCLEOTIDE SEQUENCE [LARGE SCALE GENOMIC DNA]</scope>
    <source>
        <strain>K12 / W3110 / ATCC 27325 / DSM 5911</strain>
    </source>
</reference>
<reference key="5">
    <citation type="journal article" date="1986" name="Mol. Gen. Genet.">
        <title>The recQ gene of Escherichia coli K12: primary structure and evidence for SOS regulation.</title>
        <authorList>
            <person name="Irino N."/>
            <person name="Nakayama K."/>
            <person name="Nakayama H."/>
        </authorList>
    </citation>
    <scope>NUCLEOTIDE SEQUENCE [GENOMIC DNA] OF 1-107</scope>
    <source>
        <strain>K12</strain>
    </source>
</reference>
<reference key="6">
    <citation type="journal article" date="1999" name="FEBS Lett.">
        <title>The novel transmembrane Escherichia coli proteins involved in the amino acid efflux.</title>
        <authorList>
            <person name="Zakataeva N.P."/>
            <person name="Aleshin V.V."/>
            <person name="Tokmakova I.L."/>
            <person name="Troshin P.V."/>
            <person name="Livshits V.A."/>
        </authorList>
    </citation>
    <scope>FUNCTION AS A TRANSPORTER</scope>
</reference>
<reference key="7">
    <citation type="journal article" date="2005" name="Science">
        <title>Global topology analysis of the Escherichia coli inner membrane proteome.</title>
        <authorList>
            <person name="Daley D.O."/>
            <person name="Rapp M."/>
            <person name="Granseth E."/>
            <person name="Melen K."/>
            <person name="Drew D."/>
            <person name="von Heijne G."/>
        </authorList>
    </citation>
    <scope>TOPOLOGY [LARGE SCALE ANALYSIS]</scope>
    <scope>SUBCELLULAR LOCATION</scope>
    <source>
        <strain>K12 / MG1655 / ATCC 47076</strain>
    </source>
</reference>